<gene>
    <name type="ordered locus">RC0094</name>
</gene>
<dbReference type="EMBL" id="AE006914">
    <property type="protein sequence ID" value="AAL02632.1"/>
    <property type="molecule type" value="Genomic_DNA"/>
</dbReference>
<dbReference type="PIR" id="F97711">
    <property type="entry name" value="F97711"/>
</dbReference>
<dbReference type="RefSeq" id="WP_010976778.1">
    <property type="nucleotide sequence ID" value="NC_003103.1"/>
</dbReference>
<dbReference type="SMR" id="Q92JH3"/>
<dbReference type="GeneID" id="928104"/>
<dbReference type="KEGG" id="rco:RC0094"/>
<dbReference type="HOGENOM" id="CLU_028163_1_0_5"/>
<dbReference type="Proteomes" id="UP000000816">
    <property type="component" value="Chromosome"/>
</dbReference>
<dbReference type="GO" id="GO:0008832">
    <property type="term" value="F:dGTPase activity"/>
    <property type="evidence" value="ECO:0007669"/>
    <property type="project" value="TreeGrafter"/>
</dbReference>
<dbReference type="GO" id="GO:0006203">
    <property type="term" value="P:dGTP catabolic process"/>
    <property type="evidence" value="ECO:0007669"/>
    <property type="project" value="TreeGrafter"/>
</dbReference>
<dbReference type="CDD" id="cd00077">
    <property type="entry name" value="HDc"/>
    <property type="match status" value="1"/>
</dbReference>
<dbReference type="Gene3D" id="1.10.3210.10">
    <property type="entry name" value="Hypothetical protein af1432"/>
    <property type="match status" value="1"/>
</dbReference>
<dbReference type="HAMAP" id="MF_01212">
    <property type="entry name" value="dGTPase_type2"/>
    <property type="match status" value="1"/>
</dbReference>
<dbReference type="InterPro" id="IPR006261">
    <property type="entry name" value="dGTPase"/>
</dbReference>
<dbReference type="InterPro" id="IPR050135">
    <property type="entry name" value="dGTPase-like"/>
</dbReference>
<dbReference type="InterPro" id="IPR023023">
    <property type="entry name" value="dNTPase_2"/>
</dbReference>
<dbReference type="InterPro" id="IPR003607">
    <property type="entry name" value="HD/PDEase_dom"/>
</dbReference>
<dbReference type="InterPro" id="IPR006674">
    <property type="entry name" value="HD_domain"/>
</dbReference>
<dbReference type="InterPro" id="IPR026875">
    <property type="entry name" value="PHydrolase_assoc_dom"/>
</dbReference>
<dbReference type="NCBIfam" id="TIGR01353">
    <property type="entry name" value="dGTP_triPase"/>
    <property type="match status" value="1"/>
</dbReference>
<dbReference type="NCBIfam" id="NF002326">
    <property type="entry name" value="PRK01286.1-1"/>
    <property type="match status" value="1"/>
</dbReference>
<dbReference type="NCBIfam" id="NF002330">
    <property type="entry name" value="PRK01286.1-5"/>
    <property type="match status" value="1"/>
</dbReference>
<dbReference type="PANTHER" id="PTHR11373:SF43">
    <property type="entry name" value="DEOXYGUANOSINETRIPHOSPHATE TRIPHOSPHOHYDROLASE-LIKE PROTEIN"/>
    <property type="match status" value="1"/>
</dbReference>
<dbReference type="PANTHER" id="PTHR11373">
    <property type="entry name" value="DEOXYNUCLEOSIDE TRIPHOSPHATE TRIPHOSPHOHYDROLASE"/>
    <property type="match status" value="1"/>
</dbReference>
<dbReference type="Pfam" id="PF01966">
    <property type="entry name" value="HD"/>
    <property type="match status" value="1"/>
</dbReference>
<dbReference type="Pfam" id="PF13286">
    <property type="entry name" value="HD_assoc"/>
    <property type="match status" value="1"/>
</dbReference>
<dbReference type="SMART" id="SM00471">
    <property type="entry name" value="HDc"/>
    <property type="match status" value="1"/>
</dbReference>
<dbReference type="SUPFAM" id="SSF109604">
    <property type="entry name" value="HD-domain/PDEase-like"/>
    <property type="match status" value="1"/>
</dbReference>
<dbReference type="PROSITE" id="PS51831">
    <property type="entry name" value="HD"/>
    <property type="match status" value="1"/>
</dbReference>
<sequence>MLASYASDPLKSRGRLYKEIPTSYRNEFERDRDRIIHTNAFRRLQYKTQVFINHEGDHYRNRLTHSLEVSTVARSVASTLNLSNDLAETIALAHDLGHTPFGHAGERALNECMREYNGFSHNAQSLKILTLLEKRYAAYNGVNLTWEVLEGIVKHNGPILGEINEYIAEYNKQNDLELSTYASAEAQIAALADDISYISHDLEDSIGAKIIDFHSLAELKYIDQHVVELKSKFKNISSSCLIYEVVRKLIHELITDLLWQTKENLNKEKITNIDEIRNLNYQIVDFTEKTNKNIKETKKFLHERVYKSNKITAISLKCTKIVQGLFKVYMDDINLLPVNWKMLIDSNETYSKARVVADYIAGMTDRFAIQEYNQLCSTSYITCF</sequence>
<accession>Q92JH3</accession>
<reference key="1">
    <citation type="journal article" date="2001" name="Science">
        <title>Mechanisms of evolution in Rickettsia conorii and R. prowazekii.</title>
        <authorList>
            <person name="Ogata H."/>
            <person name="Audic S."/>
            <person name="Renesto-Audiffren P."/>
            <person name="Fournier P.-E."/>
            <person name="Barbe V."/>
            <person name="Samson D."/>
            <person name="Roux V."/>
            <person name="Cossart P."/>
            <person name="Weissenbach J."/>
            <person name="Claverie J.-M."/>
            <person name="Raoult D."/>
        </authorList>
    </citation>
    <scope>NUCLEOTIDE SEQUENCE [LARGE SCALE GENOMIC DNA]</scope>
    <source>
        <strain>ATCC VR-613 / Malish 7</strain>
    </source>
</reference>
<name>DGTL1_RICCN</name>
<feature type="chain" id="PRO_0000205317" description="Deoxyguanosinetriphosphate triphosphohydrolase-like protein">
    <location>
        <begin position="1"/>
        <end position="384"/>
    </location>
</feature>
<feature type="domain" description="HD" evidence="2">
    <location>
        <begin position="62"/>
        <end position="198"/>
    </location>
</feature>
<protein>
    <recommendedName>
        <fullName evidence="1">Deoxyguanosinetriphosphate triphosphohydrolase-like protein</fullName>
    </recommendedName>
</protein>
<evidence type="ECO:0000255" key="1">
    <source>
        <dbReference type="HAMAP-Rule" id="MF_01212"/>
    </source>
</evidence>
<evidence type="ECO:0000255" key="2">
    <source>
        <dbReference type="PROSITE-ProRule" id="PRU01175"/>
    </source>
</evidence>
<proteinExistence type="inferred from homology"/>
<organism>
    <name type="scientific">Rickettsia conorii (strain ATCC VR-613 / Malish 7)</name>
    <dbReference type="NCBI Taxonomy" id="272944"/>
    <lineage>
        <taxon>Bacteria</taxon>
        <taxon>Pseudomonadati</taxon>
        <taxon>Pseudomonadota</taxon>
        <taxon>Alphaproteobacteria</taxon>
        <taxon>Rickettsiales</taxon>
        <taxon>Rickettsiaceae</taxon>
        <taxon>Rickettsieae</taxon>
        <taxon>Rickettsia</taxon>
        <taxon>spotted fever group</taxon>
    </lineage>
</organism>
<keyword id="KW-0378">Hydrolase</keyword>
<comment type="similarity">
    <text evidence="1">Belongs to the dGTPase family. Type 2 subfamily.</text>
</comment>